<protein>
    <recommendedName>
        <fullName evidence="1">Peptide chain release factor 2</fullName>
        <shortName evidence="1">RF-2</shortName>
    </recommendedName>
</protein>
<feature type="chain" id="PRO_1000005011" description="Peptide chain release factor 2">
    <location>
        <begin position="1"/>
        <end position="367"/>
    </location>
</feature>
<feature type="modified residue" description="N5-methylglutamine" evidence="1">
    <location>
        <position position="250"/>
    </location>
</feature>
<reference key="1">
    <citation type="journal article" date="2007" name="Nat. Biotechnol.">
        <title>Complete genome sequence of the erythromycin-producing bacterium Saccharopolyspora erythraea NRRL23338.</title>
        <authorList>
            <person name="Oliynyk M."/>
            <person name="Samborskyy M."/>
            <person name="Lester J.B."/>
            <person name="Mironenko T."/>
            <person name="Scott N."/>
            <person name="Dickens S."/>
            <person name="Haydock S.F."/>
            <person name="Leadlay P.F."/>
        </authorList>
    </citation>
    <scope>NUCLEOTIDE SEQUENCE [LARGE SCALE GENOMIC DNA]</scope>
    <source>
        <strain>ATCC 11635 / DSM 40517 / JCM 4748 / NBRC 13426 / NCIMB 8594 / NRRL 2338</strain>
    </source>
</reference>
<keyword id="KW-0963">Cytoplasm</keyword>
<keyword id="KW-0488">Methylation</keyword>
<keyword id="KW-0648">Protein biosynthesis</keyword>
<keyword id="KW-1185">Reference proteome</keyword>
<accession>A4F8R2</accession>
<organism>
    <name type="scientific">Saccharopolyspora erythraea (strain ATCC 11635 / DSM 40517 / JCM 4748 / NBRC 13426 / NCIMB 8594 / NRRL 2338)</name>
    <dbReference type="NCBI Taxonomy" id="405948"/>
    <lineage>
        <taxon>Bacteria</taxon>
        <taxon>Bacillati</taxon>
        <taxon>Actinomycetota</taxon>
        <taxon>Actinomycetes</taxon>
        <taxon>Pseudonocardiales</taxon>
        <taxon>Pseudonocardiaceae</taxon>
        <taxon>Saccharopolyspora</taxon>
    </lineage>
</organism>
<proteinExistence type="inferred from homology"/>
<name>RF2_SACEN</name>
<sequence>MNPDVAADLKELSTTLEGIESVMDLDALRAKIAELEEEAARPDLWDDVEHAQRVSSQLVHRQSELRKIKDLRQRVEDLEVLYELSEDEGDDSGLAEADSERTKLKKDLEALEVRTLLSGDYDQREAVVTIRAEAGGVDAADFAEMLMRMYVRWAERHEYPVEVYDTSYAEEAGLKSATFRVNAPYAYGTLSVEQGTHRLVRISPFDNQGRRQTSFAGVEVLPVVEETDHVEIPEKDIRVDVFRSSGPGGQSVNTTDSAVRITHIPTGIVVSCQNEKSQLQNKAAALRVLQSKLLAKKKEQERAELDALKDSGSSWGNQMRSYVLHPYQMVKDLRTEFEVGNPDAVLDGQIDGFLEAGIRWRRQQDAA</sequence>
<gene>
    <name evidence="1" type="primary">prfB</name>
    <name type="ordered locus">SACE_1105</name>
</gene>
<evidence type="ECO:0000255" key="1">
    <source>
        <dbReference type="HAMAP-Rule" id="MF_00094"/>
    </source>
</evidence>
<comment type="function">
    <text evidence="1">Peptide chain release factor 2 directs the termination of translation in response to the peptide chain termination codons UGA and UAA.</text>
</comment>
<comment type="subcellular location">
    <subcellularLocation>
        <location evidence="1">Cytoplasm</location>
    </subcellularLocation>
</comment>
<comment type="PTM">
    <text evidence="1">Methylated by PrmC. Methylation increases the termination efficiency of RF2.</text>
</comment>
<comment type="similarity">
    <text evidence="1">Belongs to the prokaryotic/mitochondrial release factor family.</text>
</comment>
<dbReference type="EMBL" id="AM420293">
    <property type="protein sequence ID" value="CAM00437.1"/>
    <property type="molecule type" value="Genomic_DNA"/>
</dbReference>
<dbReference type="RefSeq" id="WP_009946567.1">
    <property type="nucleotide sequence ID" value="NC_009142.1"/>
</dbReference>
<dbReference type="SMR" id="A4F8R2"/>
<dbReference type="STRING" id="405948.SACE_1105"/>
<dbReference type="KEGG" id="sen:SACE_1105"/>
<dbReference type="eggNOG" id="COG1186">
    <property type="taxonomic scope" value="Bacteria"/>
</dbReference>
<dbReference type="HOGENOM" id="CLU_036856_6_0_11"/>
<dbReference type="OrthoDB" id="9806673at2"/>
<dbReference type="Proteomes" id="UP000006728">
    <property type="component" value="Chromosome"/>
</dbReference>
<dbReference type="GO" id="GO:0005737">
    <property type="term" value="C:cytoplasm"/>
    <property type="evidence" value="ECO:0007669"/>
    <property type="project" value="UniProtKB-SubCell"/>
</dbReference>
<dbReference type="GO" id="GO:0016149">
    <property type="term" value="F:translation release factor activity, codon specific"/>
    <property type="evidence" value="ECO:0007669"/>
    <property type="project" value="UniProtKB-UniRule"/>
</dbReference>
<dbReference type="FunFam" id="3.30.160.20:FF:000010">
    <property type="entry name" value="Peptide chain release factor 2"/>
    <property type="match status" value="1"/>
</dbReference>
<dbReference type="Gene3D" id="3.30.160.20">
    <property type="match status" value="1"/>
</dbReference>
<dbReference type="Gene3D" id="3.30.70.1660">
    <property type="match status" value="1"/>
</dbReference>
<dbReference type="Gene3D" id="1.20.58.410">
    <property type="entry name" value="Release factor"/>
    <property type="match status" value="1"/>
</dbReference>
<dbReference type="HAMAP" id="MF_00094">
    <property type="entry name" value="Rel_fac_2"/>
    <property type="match status" value="1"/>
</dbReference>
<dbReference type="InterPro" id="IPR005139">
    <property type="entry name" value="PCRF"/>
</dbReference>
<dbReference type="InterPro" id="IPR000352">
    <property type="entry name" value="Pep_chain_release_fac_I"/>
</dbReference>
<dbReference type="InterPro" id="IPR045853">
    <property type="entry name" value="Pep_chain_release_fac_I_sf"/>
</dbReference>
<dbReference type="InterPro" id="IPR004374">
    <property type="entry name" value="PrfB"/>
</dbReference>
<dbReference type="NCBIfam" id="TIGR00020">
    <property type="entry name" value="prfB"/>
    <property type="match status" value="1"/>
</dbReference>
<dbReference type="PANTHER" id="PTHR43116:SF3">
    <property type="entry name" value="CLASS I PEPTIDE CHAIN RELEASE FACTOR"/>
    <property type="match status" value="1"/>
</dbReference>
<dbReference type="PANTHER" id="PTHR43116">
    <property type="entry name" value="PEPTIDE CHAIN RELEASE FACTOR 2"/>
    <property type="match status" value="1"/>
</dbReference>
<dbReference type="Pfam" id="PF03462">
    <property type="entry name" value="PCRF"/>
    <property type="match status" value="1"/>
</dbReference>
<dbReference type="Pfam" id="PF00472">
    <property type="entry name" value="RF-1"/>
    <property type="match status" value="1"/>
</dbReference>
<dbReference type="SMART" id="SM00937">
    <property type="entry name" value="PCRF"/>
    <property type="match status" value="1"/>
</dbReference>
<dbReference type="SUPFAM" id="SSF75620">
    <property type="entry name" value="Release factor"/>
    <property type="match status" value="1"/>
</dbReference>
<dbReference type="PROSITE" id="PS00745">
    <property type="entry name" value="RF_PROK_I"/>
    <property type="match status" value="1"/>
</dbReference>